<dbReference type="EC" id="5.4.99.23" evidence="2"/>
<dbReference type="EMBL" id="AE004439">
    <property type="protein sequence ID" value="AAK03803.1"/>
    <property type="molecule type" value="Genomic_DNA"/>
</dbReference>
<dbReference type="RefSeq" id="WP_010907302.1">
    <property type="nucleotide sequence ID" value="NC_002663.1"/>
</dbReference>
<dbReference type="SMR" id="Q9CKA6"/>
<dbReference type="STRING" id="272843.PM1719"/>
<dbReference type="EnsemblBacteria" id="AAK03803">
    <property type="protein sequence ID" value="AAK03803"/>
    <property type="gene ID" value="PM1719"/>
</dbReference>
<dbReference type="KEGG" id="pmu:PM1719"/>
<dbReference type="PATRIC" id="fig|272843.6.peg.1740"/>
<dbReference type="HOGENOM" id="CLU_016902_4_0_6"/>
<dbReference type="OrthoDB" id="9807829at2"/>
<dbReference type="Proteomes" id="UP000000809">
    <property type="component" value="Chromosome"/>
</dbReference>
<dbReference type="GO" id="GO:0005737">
    <property type="term" value="C:cytoplasm"/>
    <property type="evidence" value="ECO:0007669"/>
    <property type="project" value="UniProtKB-SubCell"/>
</dbReference>
<dbReference type="GO" id="GO:0160140">
    <property type="term" value="F:23S rRNA pseudouridine(1911/1915/1917) synthase activity"/>
    <property type="evidence" value="ECO:0007669"/>
    <property type="project" value="UniProtKB-EC"/>
</dbReference>
<dbReference type="GO" id="GO:0003723">
    <property type="term" value="F:RNA binding"/>
    <property type="evidence" value="ECO:0007669"/>
    <property type="project" value="UniProtKB-KW"/>
</dbReference>
<dbReference type="GO" id="GO:0000455">
    <property type="term" value="P:enzyme-directed rRNA pseudouridine synthesis"/>
    <property type="evidence" value="ECO:0007669"/>
    <property type="project" value="TreeGrafter"/>
</dbReference>
<dbReference type="CDD" id="cd02869">
    <property type="entry name" value="PseudoU_synth_RluA_like"/>
    <property type="match status" value="1"/>
</dbReference>
<dbReference type="CDD" id="cd00165">
    <property type="entry name" value="S4"/>
    <property type="match status" value="1"/>
</dbReference>
<dbReference type="FunFam" id="3.10.290.10:FF:000011">
    <property type="entry name" value="Pseudouridine synthase"/>
    <property type="match status" value="1"/>
</dbReference>
<dbReference type="FunFam" id="3.30.2350.10:FF:000006">
    <property type="entry name" value="Pseudouridine synthase"/>
    <property type="match status" value="1"/>
</dbReference>
<dbReference type="Gene3D" id="3.30.2350.10">
    <property type="entry name" value="Pseudouridine synthase"/>
    <property type="match status" value="1"/>
</dbReference>
<dbReference type="Gene3D" id="3.10.290.10">
    <property type="entry name" value="RNA-binding S4 domain"/>
    <property type="match status" value="1"/>
</dbReference>
<dbReference type="InterPro" id="IPR020103">
    <property type="entry name" value="PsdUridine_synth_cat_dom_sf"/>
</dbReference>
<dbReference type="InterPro" id="IPR006224">
    <property type="entry name" value="PsdUridine_synth_RluA-like_CS"/>
</dbReference>
<dbReference type="InterPro" id="IPR006225">
    <property type="entry name" value="PsdUridine_synth_RluC/D"/>
</dbReference>
<dbReference type="InterPro" id="IPR006145">
    <property type="entry name" value="PsdUridine_synth_RsuA/RluA"/>
</dbReference>
<dbReference type="InterPro" id="IPR050188">
    <property type="entry name" value="RluA_PseudoU_synthase"/>
</dbReference>
<dbReference type="InterPro" id="IPR002942">
    <property type="entry name" value="S4_RNA-bd"/>
</dbReference>
<dbReference type="InterPro" id="IPR036986">
    <property type="entry name" value="S4_RNA-bd_sf"/>
</dbReference>
<dbReference type="NCBIfam" id="NF008385">
    <property type="entry name" value="PRK11180.1"/>
    <property type="match status" value="1"/>
</dbReference>
<dbReference type="NCBIfam" id="TIGR00005">
    <property type="entry name" value="rluA_subfam"/>
    <property type="match status" value="1"/>
</dbReference>
<dbReference type="PANTHER" id="PTHR21600">
    <property type="entry name" value="MITOCHONDRIAL RNA PSEUDOURIDINE SYNTHASE"/>
    <property type="match status" value="1"/>
</dbReference>
<dbReference type="PANTHER" id="PTHR21600:SF44">
    <property type="entry name" value="RIBOSOMAL LARGE SUBUNIT PSEUDOURIDINE SYNTHASE D"/>
    <property type="match status" value="1"/>
</dbReference>
<dbReference type="Pfam" id="PF00849">
    <property type="entry name" value="PseudoU_synth_2"/>
    <property type="match status" value="1"/>
</dbReference>
<dbReference type="Pfam" id="PF01479">
    <property type="entry name" value="S4"/>
    <property type="match status" value="1"/>
</dbReference>
<dbReference type="SMART" id="SM00363">
    <property type="entry name" value="S4"/>
    <property type="match status" value="1"/>
</dbReference>
<dbReference type="SUPFAM" id="SSF55174">
    <property type="entry name" value="Alpha-L RNA-binding motif"/>
    <property type="match status" value="1"/>
</dbReference>
<dbReference type="SUPFAM" id="SSF55120">
    <property type="entry name" value="Pseudouridine synthase"/>
    <property type="match status" value="1"/>
</dbReference>
<dbReference type="PROSITE" id="PS01129">
    <property type="entry name" value="PSI_RLU"/>
    <property type="match status" value="1"/>
</dbReference>
<dbReference type="PROSITE" id="PS50889">
    <property type="entry name" value="S4"/>
    <property type="match status" value="1"/>
</dbReference>
<sequence length="324" mass="36895">MAQITLSAEIQLSQLGQRLDQALAELFPDYSRSRLKTWIEQNLVHVNGDVVNVPRAKVYGGEQIEIVVEIDDDTRFEPENLPLNIVYEDDDILVINKPKDFVVHPGAGNASGTVLNALLYHYPAIAEVPRAGIVHRLDKDTTGLMVIAKTIPAQTKLVRDLQKRKITREYEAIACGIMTKGGMVDQPMARHPTKRTHMAVHPMGKPAVTHYRIMERFRNYTRLRLRLETGRTHQIRVHMAHIAHPLLGDQTYGGRPRPPKNASEELMQTLRDFKRQALHAIMLRLAHPITGELMEWHAPLPTDFVELVEALKADYQLHQDDLDY</sequence>
<organism>
    <name type="scientific">Pasteurella multocida (strain Pm70)</name>
    <dbReference type="NCBI Taxonomy" id="272843"/>
    <lineage>
        <taxon>Bacteria</taxon>
        <taxon>Pseudomonadati</taxon>
        <taxon>Pseudomonadota</taxon>
        <taxon>Gammaproteobacteria</taxon>
        <taxon>Pasteurellales</taxon>
        <taxon>Pasteurellaceae</taxon>
        <taxon>Pasteurella</taxon>
    </lineage>
</organism>
<comment type="function">
    <text evidence="2">Responsible for synthesis of pseudouridine from uracil at positions 1911, 1915 and 1917 in 23S ribosomal RNA.</text>
</comment>
<comment type="catalytic activity">
    <reaction evidence="2">
        <text>uridine(1911/1915/1917) in 23S rRNA = pseudouridine(1911/1915/1917) in 23S rRNA</text>
        <dbReference type="Rhea" id="RHEA:42524"/>
        <dbReference type="Rhea" id="RHEA-COMP:10097"/>
        <dbReference type="Rhea" id="RHEA-COMP:10098"/>
        <dbReference type="ChEBI" id="CHEBI:65314"/>
        <dbReference type="ChEBI" id="CHEBI:65315"/>
        <dbReference type="EC" id="5.4.99.23"/>
    </reaction>
</comment>
<comment type="subcellular location">
    <subcellularLocation>
        <location evidence="2">Cytoplasm</location>
    </subcellularLocation>
    <text evidence="2">Associates with late stage pre-50S ribosomal subunits.</text>
</comment>
<comment type="similarity">
    <text evidence="4">Belongs to the pseudouridine synthase RluA family.</text>
</comment>
<evidence type="ECO:0000250" key="1"/>
<evidence type="ECO:0000250" key="2">
    <source>
        <dbReference type="UniProtKB" id="P33643"/>
    </source>
</evidence>
<evidence type="ECO:0000255" key="3">
    <source>
        <dbReference type="PROSITE-ProRule" id="PRU00182"/>
    </source>
</evidence>
<evidence type="ECO:0000305" key="4"/>
<proteinExistence type="inferred from homology"/>
<feature type="chain" id="PRO_0000162696" description="Ribosomal large subunit pseudouridine synthase D">
    <location>
        <begin position="1"/>
        <end position="324"/>
    </location>
</feature>
<feature type="domain" description="S4 RNA-binding" evidence="3">
    <location>
        <begin position="17"/>
        <end position="90"/>
    </location>
</feature>
<feature type="active site" evidence="1">
    <location>
        <position position="138"/>
    </location>
</feature>
<accession>Q9CKA6</accession>
<reference key="1">
    <citation type="journal article" date="2001" name="Proc. Natl. Acad. Sci. U.S.A.">
        <title>Complete genomic sequence of Pasteurella multocida Pm70.</title>
        <authorList>
            <person name="May B.J."/>
            <person name="Zhang Q."/>
            <person name="Li L.L."/>
            <person name="Paustian M.L."/>
            <person name="Whittam T.S."/>
            <person name="Kapur V."/>
        </authorList>
    </citation>
    <scope>NUCLEOTIDE SEQUENCE [LARGE SCALE GENOMIC DNA]</scope>
    <source>
        <strain>Pm70</strain>
    </source>
</reference>
<protein>
    <recommendedName>
        <fullName evidence="2">Ribosomal large subunit pseudouridine synthase D</fullName>
        <ecNumber evidence="2">5.4.99.23</ecNumber>
    </recommendedName>
    <alternativeName>
        <fullName>23S rRNA pseudouridine(1911/1915/1917) synthase</fullName>
    </alternativeName>
    <alternativeName>
        <fullName>rRNA pseudouridylate synthase D</fullName>
    </alternativeName>
    <alternativeName>
        <fullName>rRNA-uridine isomerase D</fullName>
    </alternativeName>
</protein>
<name>RLUD_PASMU</name>
<keyword id="KW-0963">Cytoplasm</keyword>
<keyword id="KW-0413">Isomerase</keyword>
<keyword id="KW-1185">Reference proteome</keyword>
<keyword id="KW-0694">RNA-binding</keyword>
<keyword id="KW-0698">rRNA processing</keyword>
<gene>
    <name type="primary">rluD</name>
    <name type="synonym">sfb</name>
    <name type="ordered locus">PM1719</name>
</gene>